<proteinExistence type="evidence at protein level"/>
<reference key="1">
    <citation type="journal article" date="2000" name="Science">
        <title>The genome sequence of Drosophila melanogaster.</title>
        <authorList>
            <person name="Adams M.D."/>
            <person name="Celniker S.E."/>
            <person name="Holt R.A."/>
            <person name="Evans C.A."/>
            <person name="Gocayne J.D."/>
            <person name="Amanatides P.G."/>
            <person name="Scherer S.E."/>
            <person name="Li P.W."/>
            <person name="Hoskins R.A."/>
            <person name="Galle R.F."/>
            <person name="George R.A."/>
            <person name="Lewis S.E."/>
            <person name="Richards S."/>
            <person name="Ashburner M."/>
            <person name="Henderson S.N."/>
            <person name="Sutton G.G."/>
            <person name="Wortman J.R."/>
            <person name="Yandell M.D."/>
            <person name="Zhang Q."/>
            <person name="Chen L.X."/>
            <person name="Brandon R.C."/>
            <person name="Rogers Y.-H.C."/>
            <person name="Blazej R.G."/>
            <person name="Champe M."/>
            <person name="Pfeiffer B.D."/>
            <person name="Wan K.H."/>
            <person name="Doyle C."/>
            <person name="Baxter E.G."/>
            <person name="Helt G."/>
            <person name="Nelson C.R."/>
            <person name="Miklos G.L.G."/>
            <person name="Abril J.F."/>
            <person name="Agbayani A."/>
            <person name="An H.-J."/>
            <person name="Andrews-Pfannkoch C."/>
            <person name="Baldwin D."/>
            <person name="Ballew R.M."/>
            <person name="Basu A."/>
            <person name="Baxendale J."/>
            <person name="Bayraktaroglu L."/>
            <person name="Beasley E.M."/>
            <person name="Beeson K.Y."/>
            <person name="Benos P.V."/>
            <person name="Berman B.P."/>
            <person name="Bhandari D."/>
            <person name="Bolshakov S."/>
            <person name="Borkova D."/>
            <person name="Botchan M.R."/>
            <person name="Bouck J."/>
            <person name="Brokstein P."/>
            <person name="Brottier P."/>
            <person name="Burtis K.C."/>
            <person name="Busam D.A."/>
            <person name="Butler H."/>
            <person name="Cadieu E."/>
            <person name="Center A."/>
            <person name="Chandra I."/>
            <person name="Cherry J.M."/>
            <person name="Cawley S."/>
            <person name="Dahlke C."/>
            <person name="Davenport L.B."/>
            <person name="Davies P."/>
            <person name="de Pablos B."/>
            <person name="Delcher A."/>
            <person name="Deng Z."/>
            <person name="Mays A.D."/>
            <person name="Dew I."/>
            <person name="Dietz S.M."/>
            <person name="Dodson K."/>
            <person name="Doup L.E."/>
            <person name="Downes M."/>
            <person name="Dugan-Rocha S."/>
            <person name="Dunkov B.C."/>
            <person name="Dunn P."/>
            <person name="Durbin K.J."/>
            <person name="Evangelista C.C."/>
            <person name="Ferraz C."/>
            <person name="Ferriera S."/>
            <person name="Fleischmann W."/>
            <person name="Fosler C."/>
            <person name="Gabrielian A.E."/>
            <person name="Garg N.S."/>
            <person name="Gelbart W.M."/>
            <person name="Glasser K."/>
            <person name="Glodek A."/>
            <person name="Gong F."/>
            <person name="Gorrell J.H."/>
            <person name="Gu Z."/>
            <person name="Guan P."/>
            <person name="Harris M."/>
            <person name="Harris N.L."/>
            <person name="Harvey D.A."/>
            <person name="Heiman T.J."/>
            <person name="Hernandez J.R."/>
            <person name="Houck J."/>
            <person name="Hostin D."/>
            <person name="Houston K.A."/>
            <person name="Howland T.J."/>
            <person name="Wei M.-H."/>
            <person name="Ibegwam C."/>
            <person name="Jalali M."/>
            <person name="Kalush F."/>
            <person name="Karpen G.H."/>
            <person name="Ke Z."/>
            <person name="Kennison J.A."/>
            <person name="Ketchum K.A."/>
            <person name="Kimmel B.E."/>
            <person name="Kodira C.D."/>
            <person name="Kraft C.L."/>
            <person name="Kravitz S."/>
            <person name="Kulp D."/>
            <person name="Lai Z."/>
            <person name="Lasko P."/>
            <person name="Lei Y."/>
            <person name="Levitsky A.A."/>
            <person name="Li J.H."/>
            <person name="Li Z."/>
            <person name="Liang Y."/>
            <person name="Lin X."/>
            <person name="Liu X."/>
            <person name="Mattei B."/>
            <person name="McIntosh T.C."/>
            <person name="McLeod M.P."/>
            <person name="McPherson D."/>
            <person name="Merkulov G."/>
            <person name="Milshina N.V."/>
            <person name="Mobarry C."/>
            <person name="Morris J."/>
            <person name="Moshrefi A."/>
            <person name="Mount S.M."/>
            <person name="Moy M."/>
            <person name="Murphy B."/>
            <person name="Murphy L."/>
            <person name="Muzny D.M."/>
            <person name="Nelson D.L."/>
            <person name="Nelson D.R."/>
            <person name="Nelson K.A."/>
            <person name="Nixon K."/>
            <person name="Nusskern D.R."/>
            <person name="Pacleb J.M."/>
            <person name="Palazzolo M."/>
            <person name="Pittman G.S."/>
            <person name="Pan S."/>
            <person name="Pollard J."/>
            <person name="Puri V."/>
            <person name="Reese M.G."/>
            <person name="Reinert K."/>
            <person name="Remington K."/>
            <person name="Saunders R.D.C."/>
            <person name="Scheeler F."/>
            <person name="Shen H."/>
            <person name="Shue B.C."/>
            <person name="Siden-Kiamos I."/>
            <person name="Simpson M."/>
            <person name="Skupski M.P."/>
            <person name="Smith T.J."/>
            <person name="Spier E."/>
            <person name="Spradling A.C."/>
            <person name="Stapleton M."/>
            <person name="Strong R."/>
            <person name="Sun E."/>
            <person name="Svirskas R."/>
            <person name="Tector C."/>
            <person name="Turner R."/>
            <person name="Venter E."/>
            <person name="Wang A.H."/>
            <person name="Wang X."/>
            <person name="Wang Z.-Y."/>
            <person name="Wassarman D.A."/>
            <person name="Weinstock G.M."/>
            <person name="Weissenbach J."/>
            <person name="Williams S.M."/>
            <person name="Woodage T."/>
            <person name="Worley K.C."/>
            <person name="Wu D."/>
            <person name="Yang S."/>
            <person name="Yao Q.A."/>
            <person name="Ye J."/>
            <person name="Yeh R.-F."/>
            <person name="Zaveri J.S."/>
            <person name="Zhan M."/>
            <person name="Zhang G."/>
            <person name="Zhao Q."/>
            <person name="Zheng L."/>
            <person name="Zheng X.H."/>
            <person name="Zhong F.N."/>
            <person name="Zhong W."/>
            <person name="Zhou X."/>
            <person name="Zhu S.C."/>
            <person name="Zhu X."/>
            <person name="Smith H.O."/>
            <person name="Gibbs R.A."/>
            <person name="Myers E.W."/>
            <person name="Rubin G.M."/>
            <person name="Venter J.C."/>
        </authorList>
    </citation>
    <scope>NUCLEOTIDE SEQUENCE [LARGE SCALE GENOMIC DNA]</scope>
    <source>
        <strain>Berkeley</strain>
    </source>
</reference>
<reference key="2">
    <citation type="journal article" date="2002" name="Genome Biol.">
        <title>Annotation of the Drosophila melanogaster euchromatic genome: a systematic review.</title>
        <authorList>
            <person name="Misra S."/>
            <person name="Crosby M.A."/>
            <person name="Mungall C.J."/>
            <person name="Matthews B.B."/>
            <person name="Campbell K.S."/>
            <person name="Hradecky P."/>
            <person name="Huang Y."/>
            <person name="Kaminker J.S."/>
            <person name="Millburn G.H."/>
            <person name="Prochnik S.E."/>
            <person name="Smith C.D."/>
            <person name="Tupy J.L."/>
            <person name="Whitfield E.J."/>
            <person name="Bayraktaroglu L."/>
            <person name="Berman B.P."/>
            <person name="Bettencourt B.R."/>
            <person name="Celniker S.E."/>
            <person name="de Grey A.D.N.J."/>
            <person name="Drysdale R.A."/>
            <person name="Harris N.L."/>
            <person name="Richter J."/>
            <person name="Russo S."/>
            <person name="Schroeder A.J."/>
            <person name="Shu S.Q."/>
            <person name="Stapleton M."/>
            <person name="Yamada C."/>
            <person name="Ashburner M."/>
            <person name="Gelbart W.M."/>
            <person name="Rubin G.M."/>
            <person name="Lewis S.E."/>
        </authorList>
    </citation>
    <scope>GENOME REANNOTATION</scope>
    <source>
        <strain>Berkeley</strain>
    </source>
</reference>
<reference key="3">
    <citation type="journal article" date="2000" name="Science">
        <title>A Drosophila complementary DNA resource.</title>
        <authorList>
            <person name="Rubin G.M."/>
            <person name="Hong L."/>
            <person name="Brokstein P."/>
            <person name="Evans-Holm M."/>
            <person name="Frise E."/>
            <person name="Stapleton M."/>
            <person name="Harvey D.A."/>
        </authorList>
    </citation>
    <scope>NUCLEOTIDE SEQUENCE [LARGE SCALE MRNA]</scope>
    <source>
        <strain>Berkeley</strain>
        <tissue>Head</tissue>
    </source>
</reference>
<reference key="4">
    <citation type="journal article" date="2005" name="Nucleic Acids Res.">
        <title>Molecular characterization of Drosophila NELF.</title>
        <authorList>
            <person name="Wu C.-H."/>
            <person name="Lee C."/>
            <person name="Fan R."/>
            <person name="Smith M.J."/>
            <person name="Yamaguchi Y."/>
            <person name="Handa H."/>
            <person name="Gilmour D.S."/>
        </authorList>
    </citation>
    <scope>FUNCTION</scope>
    <scope>SUBUNIT</scope>
    <scope>SUBCELLULAR LOCATION</scope>
</reference>
<reference key="5">
    <citation type="journal article" date="2017" name="PLoS ONE">
        <title>The Drosophila CLAMP protein associates with diverse proteins on chromatin.</title>
        <authorList>
            <person name="Urban J.A."/>
            <person name="Urban J.M."/>
            <person name="Kuzu G."/>
            <person name="Larschan E.N."/>
        </authorList>
    </citation>
    <scope>INTERACTION WITH CLAMP</scope>
</reference>
<keyword id="KW-0158">Chromosome</keyword>
<keyword id="KW-0539">Nucleus</keyword>
<keyword id="KW-1185">Reference proteome</keyword>
<keyword id="KW-0678">Repressor</keyword>
<keyword id="KW-0804">Transcription</keyword>
<keyword id="KW-0805">Transcription regulation</keyword>
<gene>
    <name type="primary">NELF-B</name>
    <name type="ORF">CG32721</name>
</gene>
<organism>
    <name type="scientific">Drosophila melanogaster</name>
    <name type="common">Fruit fly</name>
    <dbReference type="NCBI Taxonomy" id="7227"/>
    <lineage>
        <taxon>Eukaryota</taxon>
        <taxon>Metazoa</taxon>
        <taxon>Ecdysozoa</taxon>
        <taxon>Arthropoda</taxon>
        <taxon>Hexapoda</taxon>
        <taxon>Insecta</taxon>
        <taxon>Pterygota</taxon>
        <taxon>Neoptera</taxon>
        <taxon>Endopterygota</taxon>
        <taxon>Diptera</taxon>
        <taxon>Brachycera</taxon>
        <taxon>Muscomorpha</taxon>
        <taxon>Ephydroidea</taxon>
        <taxon>Drosophilidae</taxon>
        <taxon>Drosophila</taxon>
        <taxon>Sophophora</taxon>
    </lineage>
</organism>
<dbReference type="EMBL" id="AE014298">
    <property type="protein sequence ID" value="AAF46268.1"/>
    <property type="molecule type" value="Genomic_DNA"/>
</dbReference>
<dbReference type="EMBL" id="AF145659">
    <property type="protein sequence ID" value="AAD38634.1"/>
    <property type="molecule type" value="mRNA"/>
</dbReference>
<dbReference type="RefSeq" id="NP_572402.1">
    <property type="nucleotide sequence ID" value="NM_132174.3"/>
</dbReference>
<dbReference type="SMR" id="Q9Y113"/>
<dbReference type="BioGRID" id="58156">
    <property type="interactions" value="3"/>
</dbReference>
<dbReference type="ComplexPortal" id="CPX-2430">
    <property type="entry name" value="NELF negative elongation factor complex"/>
</dbReference>
<dbReference type="DIP" id="DIP-59537N"/>
<dbReference type="FunCoup" id="Q9Y113">
    <property type="interactions" value="1698"/>
</dbReference>
<dbReference type="IntAct" id="Q9Y113">
    <property type="interactions" value="5"/>
</dbReference>
<dbReference type="STRING" id="7227.FBpp0071034"/>
<dbReference type="GlyGen" id="Q9Y113">
    <property type="glycosylation" value="1 site"/>
</dbReference>
<dbReference type="PaxDb" id="7227-FBpp0071034"/>
<dbReference type="DNASU" id="31681"/>
<dbReference type="EnsemblMetazoa" id="FBtr0071077">
    <property type="protein sequence ID" value="FBpp0071034"/>
    <property type="gene ID" value="FBgn0027553"/>
</dbReference>
<dbReference type="GeneID" id="31681"/>
<dbReference type="KEGG" id="dme:Dmel_CG32721"/>
<dbReference type="UCSC" id="CG32721-RA">
    <property type="organism name" value="d. melanogaster"/>
</dbReference>
<dbReference type="AGR" id="FB:FBgn0027553"/>
<dbReference type="CTD" id="31681"/>
<dbReference type="FlyBase" id="FBgn0027553">
    <property type="gene designation" value="NELF-B"/>
</dbReference>
<dbReference type="VEuPathDB" id="VectorBase:FBgn0027553"/>
<dbReference type="eggNOG" id="ENOG502QTMJ">
    <property type="taxonomic scope" value="Eukaryota"/>
</dbReference>
<dbReference type="GeneTree" id="ENSGT00390000012665"/>
<dbReference type="HOGENOM" id="CLU_037919_0_0_1"/>
<dbReference type="InParanoid" id="Q9Y113"/>
<dbReference type="OMA" id="LLWYIHP"/>
<dbReference type="OrthoDB" id="5548359at2759"/>
<dbReference type="PhylomeDB" id="Q9Y113"/>
<dbReference type="Reactome" id="R-DME-112382">
    <property type="pathway name" value="Formation of RNA Pol II elongation complex"/>
</dbReference>
<dbReference type="Reactome" id="R-DME-113418">
    <property type="pathway name" value="Formation of the Early Elongation Complex"/>
</dbReference>
<dbReference type="Reactome" id="R-DME-674695">
    <property type="pathway name" value="RNA Polymerase II Pre-transcription Events"/>
</dbReference>
<dbReference type="Reactome" id="R-DME-6796648">
    <property type="pathway name" value="TP53 Regulates Transcription of DNA Repair Genes"/>
</dbReference>
<dbReference type="Reactome" id="R-DME-75955">
    <property type="pathway name" value="RNA Polymerase II Transcription Elongation"/>
</dbReference>
<dbReference type="BioGRID-ORCS" id="31681">
    <property type="hits" value="0 hits in 1 CRISPR screen"/>
</dbReference>
<dbReference type="GenomeRNAi" id="31681"/>
<dbReference type="PRO" id="PR:Q9Y113"/>
<dbReference type="Proteomes" id="UP000000803">
    <property type="component" value="Chromosome X"/>
</dbReference>
<dbReference type="Bgee" id="FBgn0027553">
    <property type="expression patterns" value="Expressed in oocyte and 36 other cell types or tissues"/>
</dbReference>
<dbReference type="GO" id="GO:0005694">
    <property type="term" value="C:chromosome"/>
    <property type="evidence" value="ECO:0007669"/>
    <property type="project" value="UniProtKB-SubCell"/>
</dbReference>
<dbReference type="GO" id="GO:0032021">
    <property type="term" value="C:NELF complex"/>
    <property type="evidence" value="ECO:0000353"/>
    <property type="project" value="FlyBase"/>
</dbReference>
<dbReference type="GO" id="GO:0005634">
    <property type="term" value="C:nucleus"/>
    <property type="evidence" value="ECO:0000314"/>
    <property type="project" value="FlyBase"/>
</dbReference>
<dbReference type="GO" id="GO:0017053">
    <property type="term" value="C:transcription repressor complex"/>
    <property type="evidence" value="ECO:0000250"/>
    <property type="project" value="UniProtKB"/>
</dbReference>
<dbReference type="GO" id="GO:0003723">
    <property type="term" value="F:RNA binding"/>
    <property type="evidence" value="ECO:0000250"/>
    <property type="project" value="UniProtKB"/>
</dbReference>
<dbReference type="GO" id="GO:0000122">
    <property type="term" value="P:negative regulation of transcription by RNA polymerase II"/>
    <property type="evidence" value="ECO:0000315"/>
    <property type="project" value="FlyBase"/>
</dbReference>
<dbReference type="GO" id="GO:0034244">
    <property type="term" value="P:negative regulation of transcription elongation by RNA polymerase II"/>
    <property type="evidence" value="ECO:0000314"/>
    <property type="project" value="FlyBase"/>
</dbReference>
<dbReference type="GO" id="GO:0045944">
    <property type="term" value="P:positive regulation of transcription by RNA polymerase II"/>
    <property type="evidence" value="ECO:0000315"/>
    <property type="project" value="FlyBase"/>
</dbReference>
<dbReference type="InterPro" id="IPR010405">
    <property type="entry name" value="COBRA1"/>
</dbReference>
<dbReference type="PANTHER" id="PTHR13503:SF3">
    <property type="entry name" value="NEGATIVE ELONGATION FACTOR B"/>
    <property type="match status" value="1"/>
</dbReference>
<dbReference type="PANTHER" id="PTHR13503">
    <property type="entry name" value="NEGATIVE ELONGATION FACTOR COMPLEX MEMBER B"/>
    <property type="match status" value="1"/>
</dbReference>
<dbReference type="Pfam" id="PF06209">
    <property type="entry name" value="COBRA1"/>
    <property type="match status" value="1"/>
</dbReference>
<name>NELFB_DROME</name>
<evidence type="ECO:0000269" key="1">
    <source>
    </source>
</evidence>
<evidence type="ECO:0000269" key="2">
    <source>
    </source>
</evidence>
<evidence type="ECO:0000305" key="3"/>
<comment type="function">
    <text evidence="1">Essential component of the NELF complex, a complex that negatively regulates the elongation of transcription by RNA polymerase II.</text>
</comment>
<comment type="subunit">
    <text evidence="1 2">Component of the NELF complex (PubMed:15741180). Interacts with Clamp (PubMed:29281702).</text>
</comment>
<comment type="subcellular location">
    <subcellularLocation>
        <location evidence="1">Nucleus</location>
    </subcellularLocation>
    <subcellularLocation>
        <location evidence="1">Chromosome</location>
    </subcellularLocation>
    <text>Associates with polytene chromosomes. Associates with the hsp70 promoter when it is inactive, but not when it is activated.</text>
</comment>
<comment type="similarity">
    <text evidence="3">Belongs to the NELF-B family.</text>
</comment>
<feature type="chain" id="PRO_0000219131" description="Negative elongation factor B">
    <location>
        <begin position="1"/>
        <end position="594"/>
    </location>
</feature>
<protein>
    <recommendedName>
        <fullName>Negative elongation factor B</fullName>
    </recommendedName>
</protein>
<accession>Q9Y113</accession>
<sequence>MIMSTPAKNNNGTGLEDVNIPGQAYLREALTSCTDPLKAIESFQLENGVLLPSLRPMLPLLDLHGVRRLDFHTSLMEELRDKLIAHINEMGQKEPRERDKKLKELLVKSFPVVRVKSLRPVVMAILRNTQHIDDKYLKILVRDRELYADTDTEVKRQIWRDNQSLFGDEVSPLLSQYIREKEHILFDHTNLNNLFFHPTPKVRRQGEVVQKLANMIGTSVKLYDMVLQFLRTLFLRTRNVHYCTLRAELLMALHDLEVQEIISIDPCHKFTWCLDACIREKNVDIKRSRELQGFLDNIKRGQEQVLGDLSMTLCDPYAINFLATSAIKILHHLINNEGMPRDNQILILLLRMLALGLSAWVMIDSQDFKEPKLDCQVVTKFLPALMSLMVDDQCRSLHAKLPPDERESALTTIEHSGPAPDAVEAYIQESSVASILAMYYTLHTARLKDRVGVLRVLAILSACKDDRAYEDPFLHSLIALLIPMSEEFATEDFCTTLFDEFIFAGLTRENVTSRHMLKLLWYVHNKLPAGRLATLMKAMQPTTAHNEHIHKLYEILQERIGTGAAETPVIEAPPMEFDSPLKSVPTPGPHYNVQ</sequence>